<proteinExistence type="inferred from homology"/>
<gene>
    <name evidence="1" type="primary">leuA</name>
    <name type="ordered locus">SBO_0061</name>
</gene>
<name>LEU1_SHIBS</name>
<keyword id="KW-0028">Amino-acid biosynthesis</keyword>
<keyword id="KW-0100">Branched-chain amino acid biosynthesis</keyword>
<keyword id="KW-0963">Cytoplasm</keyword>
<keyword id="KW-0432">Leucine biosynthesis</keyword>
<keyword id="KW-0464">Manganese</keyword>
<keyword id="KW-0479">Metal-binding</keyword>
<keyword id="KW-0808">Transferase</keyword>
<protein>
    <recommendedName>
        <fullName evidence="1">2-isopropylmalate synthase</fullName>
        <ecNumber evidence="1">2.3.3.13</ecNumber>
    </recommendedName>
    <alternativeName>
        <fullName evidence="1">Alpha-IPM synthase</fullName>
    </alternativeName>
    <alternativeName>
        <fullName evidence="1">Alpha-isopropylmalate synthase</fullName>
    </alternativeName>
</protein>
<comment type="function">
    <text evidence="1">Catalyzes the condensation of the acetyl group of acetyl-CoA with 3-methyl-2-oxobutanoate (2-ketoisovalerate) to form 3-carboxy-3-hydroxy-4-methylpentanoate (2-isopropylmalate).</text>
</comment>
<comment type="catalytic activity">
    <reaction evidence="1">
        <text>3-methyl-2-oxobutanoate + acetyl-CoA + H2O = (2S)-2-isopropylmalate + CoA + H(+)</text>
        <dbReference type="Rhea" id="RHEA:21524"/>
        <dbReference type="ChEBI" id="CHEBI:1178"/>
        <dbReference type="ChEBI" id="CHEBI:11851"/>
        <dbReference type="ChEBI" id="CHEBI:15377"/>
        <dbReference type="ChEBI" id="CHEBI:15378"/>
        <dbReference type="ChEBI" id="CHEBI:57287"/>
        <dbReference type="ChEBI" id="CHEBI:57288"/>
        <dbReference type="EC" id="2.3.3.13"/>
    </reaction>
</comment>
<comment type="cofactor">
    <cofactor evidence="1">
        <name>Mn(2+)</name>
        <dbReference type="ChEBI" id="CHEBI:29035"/>
    </cofactor>
</comment>
<comment type="pathway">
    <text evidence="1">Amino-acid biosynthesis; L-leucine biosynthesis; L-leucine from 3-methyl-2-oxobutanoate: step 1/4.</text>
</comment>
<comment type="subunit">
    <text evidence="1">Homodimer.</text>
</comment>
<comment type="subcellular location">
    <subcellularLocation>
        <location evidence="1">Cytoplasm</location>
    </subcellularLocation>
</comment>
<comment type="similarity">
    <text evidence="1">Belongs to the alpha-IPM synthase/homocitrate synthase family. LeuA type 1 subfamily.</text>
</comment>
<evidence type="ECO:0000255" key="1">
    <source>
        <dbReference type="HAMAP-Rule" id="MF_01025"/>
    </source>
</evidence>
<organism>
    <name type="scientific">Shigella boydii serotype 4 (strain Sb227)</name>
    <dbReference type="NCBI Taxonomy" id="300268"/>
    <lineage>
        <taxon>Bacteria</taxon>
        <taxon>Pseudomonadati</taxon>
        <taxon>Pseudomonadota</taxon>
        <taxon>Gammaproteobacteria</taxon>
        <taxon>Enterobacterales</taxon>
        <taxon>Enterobacteriaceae</taxon>
        <taxon>Shigella</taxon>
    </lineage>
</organism>
<dbReference type="EC" id="2.3.3.13" evidence="1"/>
<dbReference type="EMBL" id="CP000036">
    <property type="protein sequence ID" value="ABB64797.1"/>
    <property type="molecule type" value="Genomic_DNA"/>
</dbReference>
<dbReference type="RefSeq" id="WP_000082846.1">
    <property type="nucleotide sequence ID" value="NC_007613.1"/>
</dbReference>
<dbReference type="SMR" id="Q326G1"/>
<dbReference type="GeneID" id="75202109"/>
<dbReference type="KEGG" id="sbo:SBO_0061"/>
<dbReference type="HOGENOM" id="CLU_022158_0_1_6"/>
<dbReference type="UniPathway" id="UPA00048">
    <property type="reaction ID" value="UER00070"/>
</dbReference>
<dbReference type="Proteomes" id="UP000007067">
    <property type="component" value="Chromosome"/>
</dbReference>
<dbReference type="GO" id="GO:0005829">
    <property type="term" value="C:cytosol"/>
    <property type="evidence" value="ECO:0007669"/>
    <property type="project" value="TreeGrafter"/>
</dbReference>
<dbReference type="GO" id="GO:0003852">
    <property type="term" value="F:2-isopropylmalate synthase activity"/>
    <property type="evidence" value="ECO:0007669"/>
    <property type="project" value="UniProtKB-UniRule"/>
</dbReference>
<dbReference type="GO" id="GO:0003985">
    <property type="term" value="F:acetyl-CoA C-acetyltransferase activity"/>
    <property type="evidence" value="ECO:0007669"/>
    <property type="project" value="UniProtKB-UniRule"/>
</dbReference>
<dbReference type="GO" id="GO:0030145">
    <property type="term" value="F:manganese ion binding"/>
    <property type="evidence" value="ECO:0007669"/>
    <property type="project" value="UniProtKB-UniRule"/>
</dbReference>
<dbReference type="GO" id="GO:0009098">
    <property type="term" value="P:L-leucine biosynthetic process"/>
    <property type="evidence" value="ECO:0007669"/>
    <property type="project" value="UniProtKB-UniRule"/>
</dbReference>
<dbReference type="CDD" id="cd07940">
    <property type="entry name" value="DRE_TIM_IPMS"/>
    <property type="match status" value="1"/>
</dbReference>
<dbReference type="FunFam" id="1.10.238.260:FF:000001">
    <property type="entry name" value="2-isopropylmalate synthase"/>
    <property type="match status" value="1"/>
</dbReference>
<dbReference type="FunFam" id="3.20.20.70:FF:000010">
    <property type="entry name" value="2-isopropylmalate synthase"/>
    <property type="match status" value="1"/>
</dbReference>
<dbReference type="FunFam" id="3.30.160.270:FF:000001">
    <property type="entry name" value="2-isopropylmalate synthase"/>
    <property type="match status" value="1"/>
</dbReference>
<dbReference type="Gene3D" id="1.10.238.260">
    <property type="match status" value="1"/>
</dbReference>
<dbReference type="Gene3D" id="3.30.160.270">
    <property type="match status" value="1"/>
</dbReference>
<dbReference type="Gene3D" id="3.20.20.70">
    <property type="entry name" value="Aldolase class I"/>
    <property type="match status" value="1"/>
</dbReference>
<dbReference type="HAMAP" id="MF_01025">
    <property type="entry name" value="LeuA_type1"/>
    <property type="match status" value="1"/>
</dbReference>
<dbReference type="InterPro" id="IPR050073">
    <property type="entry name" value="2-IPM_HCS-like"/>
</dbReference>
<dbReference type="InterPro" id="IPR013709">
    <property type="entry name" value="2-isopropylmalate_synth_dimer"/>
</dbReference>
<dbReference type="InterPro" id="IPR002034">
    <property type="entry name" value="AIPM/Hcit_synth_CS"/>
</dbReference>
<dbReference type="InterPro" id="IPR013785">
    <property type="entry name" value="Aldolase_TIM"/>
</dbReference>
<dbReference type="InterPro" id="IPR054691">
    <property type="entry name" value="LeuA/HCS_post-cat"/>
</dbReference>
<dbReference type="InterPro" id="IPR036230">
    <property type="entry name" value="LeuA_allosteric_dom_sf"/>
</dbReference>
<dbReference type="InterPro" id="IPR005671">
    <property type="entry name" value="LeuA_bact_synth"/>
</dbReference>
<dbReference type="InterPro" id="IPR000891">
    <property type="entry name" value="PYR_CT"/>
</dbReference>
<dbReference type="NCBIfam" id="TIGR00973">
    <property type="entry name" value="leuA_bact"/>
    <property type="match status" value="1"/>
</dbReference>
<dbReference type="NCBIfam" id="NF002084">
    <property type="entry name" value="PRK00915.1-1"/>
    <property type="match status" value="1"/>
</dbReference>
<dbReference type="NCBIfam" id="NF002086">
    <property type="entry name" value="PRK00915.1-3"/>
    <property type="match status" value="1"/>
</dbReference>
<dbReference type="PANTHER" id="PTHR10277:SF9">
    <property type="entry name" value="2-ISOPROPYLMALATE SYNTHASE 1, CHLOROPLASTIC-RELATED"/>
    <property type="match status" value="1"/>
</dbReference>
<dbReference type="PANTHER" id="PTHR10277">
    <property type="entry name" value="HOMOCITRATE SYNTHASE-RELATED"/>
    <property type="match status" value="1"/>
</dbReference>
<dbReference type="Pfam" id="PF22617">
    <property type="entry name" value="HCS_D2"/>
    <property type="match status" value="1"/>
</dbReference>
<dbReference type="Pfam" id="PF00682">
    <property type="entry name" value="HMGL-like"/>
    <property type="match status" value="1"/>
</dbReference>
<dbReference type="Pfam" id="PF08502">
    <property type="entry name" value="LeuA_dimer"/>
    <property type="match status" value="1"/>
</dbReference>
<dbReference type="SMART" id="SM00917">
    <property type="entry name" value="LeuA_dimer"/>
    <property type="match status" value="1"/>
</dbReference>
<dbReference type="SUPFAM" id="SSF110921">
    <property type="entry name" value="2-isopropylmalate synthase LeuA, allosteric (dimerisation) domain"/>
    <property type="match status" value="1"/>
</dbReference>
<dbReference type="SUPFAM" id="SSF51569">
    <property type="entry name" value="Aldolase"/>
    <property type="match status" value="1"/>
</dbReference>
<dbReference type="PROSITE" id="PS00815">
    <property type="entry name" value="AIPM_HOMOCIT_SYNTH_1"/>
    <property type="match status" value="1"/>
</dbReference>
<dbReference type="PROSITE" id="PS00816">
    <property type="entry name" value="AIPM_HOMOCIT_SYNTH_2"/>
    <property type="match status" value="1"/>
</dbReference>
<dbReference type="PROSITE" id="PS50991">
    <property type="entry name" value="PYR_CT"/>
    <property type="match status" value="1"/>
</dbReference>
<reference key="1">
    <citation type="journal article" date="2005" name="Nucleic Acids Res.">
        <title>Genome dynamics and diversity of Shigella species, the etiologic agents of bacillary dysentery.</title>
        <authorList>
            <person name="Yang F."/>
            <person name="Yang J."/>
            <person name="Zhang X."/>
            <person name="Chen L."/>
            <person name="Jiang Y."/>
            <person name="Yan Y."/>
            <person name="Tang X."/>
            <person name="Wang J."/>
            <person name="Xiong Z."/>
            <person name="Dong J."/>
            <person name="Xue Y."/>
            <person name="Zhu Y."/>
            <person name="Xu X."/>
            <person name="Sun L."/>
            <person name="Chen S."/>
            <person name="Nie H."/>
            <person name="Peng J."/>
            <person name="Xu J."/>
            <person name="Wang Y."/>
            <person name="Yuan Z."/>
            <person name="Wen Y."/>
            <person name="Yao Z."/>
            <person name="Shen Y."/>
            <person name="Qiang B."/>
            <person name="Hou Y."/>
            <person name="Yu J."/>
            <person name="Jin Q."/>
        </authorList>
    </citation>
    <scope>NUCLEOTIDE SEQUENCE [LARGE SCALE GENOMIC DNA]</scope>
    <source>
        <strain>Sb227</strain>
    </source>
</reference>
<sequence>MSQQVIIFDTTLRDGEQALQASLSVKEKLQIALALERMGVDVMEVGFPVSSPGDFESVQTIARQVKNSRVCALARCVEKDIDVAAESLKVAEAFRIHTFIATSPMHIATKLRSTLDEVIERAIYMVKRARNYTDDVEFSCEDAGRTPIADLARVVEAAINAGATTINIPDTVGYTMPFEFAGIISGLYERVPNIDKAIISVHTHDDLGLAVGNSLAAVHAGARQVEGAMNGIGERAGNCSLEEVIMAIKVRKDILNVHTAINHQEIWRTSQLVSQICNMPIPANKAIVGSGAFAHSSGIHQDGVLKNRENYEIMTPESIGLNQIQLNLTSRSGRAAVKHRMDEMGYKESEYNLDNLYDAFLKLADKKGQVFDYDLEALAFIGKQQEEPEHFRLDYFSVQSGSNDIATAAVKLACGEEVKAEAANGNGPVDAVYQAINRITDYNVELVKYSLTAKGHGKDALGQVDIVANYNGRRFHGVGLATDIVESSAKAMVHVLNNIWRAAEVEKELQRKAQHNENNKETV</sequence>
<accession>Q326G1</accession>
<feature type="chain" id="PRO_1000149296" description="2-isopropylmalate synthase">
    <location>
        <begin position="1"/>
        <end position="523"/>
    </location>
</feature>
<feature type="domain" description="Pyruvate carboxyltransferase" evidence="1">
    <location>
        <begin position="5"/>
        <end position="267"/>
    </location>
</feature>
<feature type="region of interest" description="Regulatory domain" evidence="1">
    <location>
        <begin position="392"/>
        <end position="523"/>
    </location>
</feature>
<feature type="binding site" evidence="1">
    <location>
        <position position="14"/>
    </location>
    <ligand>
        <name>Mn(2+)</name>
        <dbReference type="ChEBI" id="CHEBI:29035"/>
    </ligand>
</feature>
<feature type="binding site" evidence="1">
    <location>
        <position position="202"/>
    </location>
    <ligand>
        <name>Mn(2+)</name>
        <dbReference type="ChEBI" id="CHEBI:29035"/>
    </ligand>
</feature>
<feature type="binding site" evidence="1">
    <location>
        <position position="204"/>
    </location>
    <ligand>
        <name>Mn(2+)</name>
        <dbReference type="ChEBI" id="CHEBI:29035"/>
    </ligand>
</feature>
<feature type="binding site" evidence="1">
    <location>
        <position position="238"/>
    </location>
    <ligand>
        <name>Mn(2+)</name>
        <dbReference type="ChEBI" id="CHEBI:29035"/>
    </ligand>
</feature>